<dbReference type="EC" id="6.1.1.4" evidence="1"/>
<dbReference type="EMBL" id="CP000774">
    <property type="protein sequence ID" value="ABS62900.1"/>
    <property type="molecule type" value="Genomic_DNA"/>
</dbReference>
<dbReference type="RefSeq" id="WP_012110174.1">
    <property type="nucleotide sequence ID" value="NC_009719.1"/>
</dbReference>
<dbReference type="SMR" id="A7HSL7"/>
<dbReference type="STRING" id="402881.Plav_1280"/>
<dbReference type="KEGG" id="pla:Plav_1280"/>
<dbReference type="eggNOG" id="COG0495">
    <property type="taxonomic scope" value="Bacteria"/>
</dbReference>
<dbReference type="HOGENOM" id="CLU_004427_0_0_5"/>
<dbReference type="OrthoDB" id="9810365at2"/>
<dbReference type="Proteomes" id="UP000006377">
    <property type="component" value="Chromosome"/>
</dbReference>
<dbReference type="GO" id="GO:0005829">
    <property type="term" value="C:cytosol"/>
    <property type="evidence" value="ECO:0007669"/>
    <property type="project" value="TreeGrafter"/>
</dbReference>
<dbReference type="GO" id="GO:0002161">
    <property type="term" value="F:aminoacyl-tRNA deacylase activity"/>
    <property type="evidence" value="ECO:0007669"/>
    <property type="project" value="InterPro"/>
</dbReference>
<dbReference type="GO" id="GO:0005524">
    <property type="term" value="F:ATP binding"/>
    <property type="evidence" value="ECO:0007669"/>
    <property type="project" value="UniProtKB-UniRule"/>
</dbReference>
<dbReference type="GO" id="GO:0004823">
    <property type="term" value="F:leucine-tRNA ligase activity"/>
    <property type="evidence" value="ECO:0007669"/>
    <property type="project" value="UniProtKB-UniRule"/>
</dbReference>
<dbReference type="GO" id="GO:0006429">
    <property type="term" value="P:leucyl-tRNA aminoacylation"/>
    <property type="evidence" value="ECO:0007669"/>
    <property type="project" value="UniProtKB-UniRule"/>
</dbReference>
<dbReference type="CDD" id="cd07958">
    <property type="entry name" value="Anticodon_Ia_Leu_BEm"/>
    <property type="match status" value="1"/>
</dbReference>
<dbReference type="CDD" id="cd00812">
    <property type="entry name" value="LeuRS_core"/>
    <property type="match status" value="1"/>
</dbReference>
<dbReference type="FunFam" id="1.10.730.10:FF:000002">
    <property type="entry name" value="Leucine--tRNA ligase"/>
    <property type="match status" value="1"/>
</dbReference>
<dbReference type="FunFam" id="3.10.20.590:FF:000001">
    <property type="entry name" value="Leucine--tRNA ligase"/>
    <property type="match status" value="1"/>
</dbReference>
<dbReference type="FunFam" id="3.40.50.620:FF:000003">
    <property type="entry name" value="Leucine--tRNA ligase"/>
    <property type="match status" value="1"/>
</dbReference>
<dbReference type="FunFam" id="3.40.50.620:FF:000056">
    <property type="entry name" value="Leucine--tRNA ligase"/>
    <property type="match status" value="1"/>
</dbReference>
<dbReference type="Gene3D" id="2.20.28.290">
    <property type="match status" value="1"/>
</dbReference>
<dbReference type="Gene3D" id="3.10.20.590">
    <property type="match status" value="1"/>
</dbReference>
<dbReference type="Gene3D" id="3.40.50.620">
    <property type="entry name" value="HUPs"/>
    <property type="match status" value="2"/>
</dbReference>
<dbReference type="Gene3D" id="1.10.730.10">
    <property type="entry name" value="Isoleucyl-tRNA Synthetase, Domain 1"/>
    <property type="match status" value="1"/>
</dbReference>
<dbReference type="Gene3D" id="3.90.740.10">
    <property type="entry name" value="Valyl/Leucyl/Isoleucyl-tRNA synthetase, editing domain"/>
    <property type="match status" value="1"/>
</dbReference>
<dbReference type="HAMAP" id="MF_00049_B">
    <property type="entry name" value="Leu_tRNA_synth_B"/>
    <property type="match status" value="1"/>
</dbReference>
<dbReference type="InterPro" id="IPR001412">
    <property type="entry name" value="aa-tRNA-synth_I_CS"/>
</dbReference>
<dbReference type="InterPro" id="IPR002300">
    <property type="entry name" value="aa-tRNA-synth_Ia"/>
</dbReference>
<dbReference type="InterPro" id="IPR002302">
    <property type="entry name" value="Leu-tRNA-ligase"/>
</dbReference>
<dbReference type="InterPro" id="IPR025709">
    <property type="entry name" value="Leu_tRNA-synth_edit"/>
</dbReference>
<dbReference type="InterPro" id="IPR013155">
    <property type="entry name" value="M/V/L/I-tRNA-synth_anticd-bd"/>
</dbReference>
<dbReference type="InterPro" id="IPR015413">
    <property type="entry name" value="Methionyl/Leucyl_tRNA_Synth"/>
</dbReference>
<dbReference type="InterPro" id="IPR014729">
    <property type="entry name" value="Rossmann-like_a/b/a_fold"/>
</dbReference>
<dbReference type="InterPro" id="IPR009080">
    <property type="entry name" value="tRNAsynth_Ia_anticodon-bd"/>
</dbReference>
<dbReference type="InterPro" id="IPR009008">
    <property type="entry name" value="Val/Leu/Ile-tRNA-synth_edit"/>
</dbReference>
<dbReference type="NCBIfam" id="TIGR00396">
    <property type="entry name" value="leuS_bact"/>
    <property type="match status" value="1"/>
</dbReference>
<dbReference type="PANTHER" id="PTHR43740:SF2">
    <property type="entry name" value="LEUCINE--TRNA LIGASE, MITOCHONDRIAL"/>
    <property type="match status" value="1"/>
</dbReference>
<dbReference type="PANTHER" id="PTHR43740">
    <property type="entry name" value="LEUCYL-TRNA SYNTHETASE"/>
    <property type="match status" value="1"/>
</dbReference>
<dbReference type="Pfam" id="PF08264">
    <property type="entry name" value="Anticodon_1"/>
    <property type="match status" value="1"/>
</dbReference>
<dbReference type="Pfam" id="PF00133">
    <property type="entry name" value="tRNA-synt_1"/>
    <property type="match status" value="2"/>
</dbReference>
<dbReference type="Pfam" id="PF13603">
    <property type="entry name" value="tRNA-synt_1_2"/>
    <property type="match status" value="1"/>
</dbReference>
<dbReference type="Pfam" id="PF09334">
    <property type="entry name" value="tRNA-synt_1g"/>
    <property type="match status" value="1"/>
</dbReference>
<dbReference type="PRINTS" id="PR00985">
    <property type="entry name" value="TRNASYNTHLEU"/>
</dbReference>
<dbReference type="SUPFAM" id="SSF47323">
    <property type="entry name" value="Anticodon-binding domain of a subclass of class I aminoacyl-tRNA synthetases"/>
    <property type="match status" value="1"/>
</dbReference>
<dbReference type="SUPFAM" id="SSF52374">
    <property type="entry name" value="Nucleotidylyl transferase"/>
    <property type="match status" value="1"/>
</dbReference>
<dbReference type="SUPFAM" id="SSF50677">
    <property type="entry name" value="ValRS/IleRS/LeuRS editing domain"/>
    <property type="match status" value="1"/>
</dbReference>
<dbReference type="PROSITE" id="PS00178">
    <property type="entry name" value="AA_TRNA_LIGASE_I"/>
    <property type="match status" value="1"/>
</dbReference>
<reference key="1">
    <citation type="journal article" date="2011" name="Stand. Genomic Sci.">
        <title>Complete genome sequence of Parvibaculum lavamentivorans type strain (DS-1(T)).</title>
        <authorList>
            <person name="Schleheck D."/>
            <person name="Weiss M."/>
            <person name="Pitluck S."/>
            <person name="Bruce D."/>
            <person name="Land M.L."/>
            <person name="Han S."/>
            <person name="Saunders E."/>
            <person name="Tapia R."/>
            <person name="Detter C."/>
            <person name="Brettin T."/>
            <person name="Han J."/>
            <person name="Woyke T."/>
            <person name="Goodwin L."/>
            <person name="Pennacchio L."/>
            <person name="Nolan M."/>
            <person name="Cook A.M."/>
            <person name="Kjelleberg S."/>
            <person name="Thomas T."/>
        </authorList>
    </citation>
    <scope>NUCLEOTIDE SEQUENCE [LARGE SCALE GENOMIC DNA]</scope>
    <source>
        <strain>DS-1 / DSM 13023 / NCIMB 13966</strain>
    </source>
</reference>
<comment type="catalytic activity">
    <reaction evidence="1">
        <text>tRNA(Leu) + L-leucine + ATP = L-leucyl-tRNA(Leu) + AMP + diphosphate</text>
        <dbReference type="Rhea" id="RHEA:11688"/>
        <dbReference type="Rhea" id="RHEA-COMP:9613"/>
        <dbReference type="Rhea" id="RHEA-COMP:9622"/>
        <dbReference type="ChEBI" id="CHEBI:30616"/>
        <dbReference type="ChEBI" id="CHEBI:33019"/>
        <dbReference type="ChEBI" id="CHEBI:57427"/>
        <dbReference type="ChEBI" id="CHEBI:78442"/>
        <dbReference type="ChEBI" id="CHEBI:78494"/>
        <dbReference type="ChEBI" id="CHEBI:456215"/>
        <dbReference type="EC" id="6.1.1.4"/>
    </reaction>
</comment>
<comment type="subcellular location">
    <subcellularLocation>
        <location evidence="1">Cytoplasm</location>
    </subcellularLocation>
</comment>
<comment type="similarity">
    <text evidence="1">Belongs to the class-I aminoacyl-tRNA synthetase family.</text>
</comment>
<gene>
    <name evidence="1" type="primary">leuS</name>
    <name type="ordered locus">Plav_1280</name>
</gene>
<accession>A7HSL7</accession>
<organism>
    <name type="scientific">Parvibaculum lavamentivorans (strain DS-1 / DSM 13023 / NCIMB 13966)</name>
    <dbReference type="NCBI Taxonomy" id="402881"/>
    <lineage>
        <taxon>Bacteria</taxon>
        <taxon>Pseudomonadati</taxon>
        <taxon>Pseudomonadota</taxon>
        <taxon>Alphaproteobacteria</taxon>
        <taxon>Hyphomicrobiales</taxon>
        <taxon>Parvibaculaceae</taxon>
        <taxon>Parvibaculum</taxon>
    </lineage>
</organism>
<proteinExistence type="inferred from homology"/>
<keyword id="KW-0030">Aminoacyl-tRNA synthetase</keyword>
<keyword id="KW-0067">ATP-binding</keyword>
<keyword id="KW-0963">Cytoplasm</keyword>
<keyword id="KW-0436">Ligase</keyword>
<keyword id="KW-0547">Nucleotide-binding</keyword>
<keyword id="KW-0648">Protein biosynthesis</keyword>
<keyword id="KW-1185">Reference proteome</keyword>
<evidence type="ECO:0000255" key="1">
    <source>
        <dbReference type="HAMAP-Rule" id="MF_00049"/>
    </source>
</evidence>
<sequence>MSTRYNARAAEPKWQKIWEERGDFLMRDDADGKPKYYVLEMFPYPSGRIHMGHVRNYTMGDVIARYKKARGFNVLHPMGWDAFGMPAENAAMEKNVHPKGWTYDNIAAMREQLKAIGLAIDWSREFATCDPEYYGHEQALFLDMLEAGLVSRKKSMVNWDPVDNTVLANEQVIDGRGWRSGALVERRELTQWFLKISDFADELLEGLDTLDRWPEKVRLMQKNWIGRSEGARVFFELENAPDGNTKLEIFTTRPDTLYGASFCALSPHHPLTQSLAKDNPALTDFIRECDRIGTSEEAIETADKMGFDTGLKARHPFIEGKTLPVYVANFVLMDYGTGAIFACPAHDQRDLDFARKYNLPVIPVVAPKDKQGAELDAFASGLAETGTDAYTGDGVAINSDFLNGLDVQSAKRAAIDRLEAKGIGEGTVNYRLRDWGISRQRYWGCPIPVIHCASCGTLPVPRDQLPVVLPDDVNFSEPGNPLDRHPSWKHVDCPKCGKPASRETDTFDTFVDSSWYFVRFTAPDAPTPTDKALADHWLPVDQYIGGIEHAILHLLYSRFFTRAMKATGHVSLDEPFAGLFTQGMVNHETYRDAEGRWVPPAEVDIETVSGKRVAKRIADGEPVIIGSVEKMSKSKKNTVDPEDIIAKYGADTARWFMLSDSPPERDVQWTDQGAEGAWRFTQRLWRMVTERQEDLAPTGTPMPTAFSEDELTLRRAAHQALAAATEDFENLRFNRAVARVYELANAVSGFTPGTPEGAFAKREALEILVQIVGPMMPHIAEECWEALGHGEPLTAAEWPVADKALLVEDSVTIAVQVNGKRRDELTIARDADRETVERAALALEKVGKAIDGKPVRKVIVVPGKIVNIVV</sequence>
<feature type="chain" id="PRO_0000334788" description="Leucine--tRNA ligase">
    <location>
        <begin position="1"/>
        <end position="870"/>
    </location>
</feature>
<feature type="short sequence motif" description="'HIGH' region">
    <location>
        <begin position="43"/>
        <end position="53"/>
    </location>
</feature>
<feature type="short sequence motif" description="'KMSKS' region">
    <location>
        <begin position="630"/>
        <end position="634"/>
    </location>
</feature>
<feature type="binding site" evidence="1">
    <location>
        <position position="633"/>
    </location>
    <ligand>
        <name>ATP</name>
        <dbReference type="ChEBI" id="CHEBI:30616"/>
    </ligand>
</feature>
<protein>
    <recommendedName>
        <fullName evidence="1">Leucine--tRNA ligase</fullName>
        <ecNumber evidence="1">6.1.1.4</ecNumber>
    </recommendedName>
    <alternativeName>
        <fullName evidence="1">Leucyl-tRNA synthetase</fullName>
        <shortName evidence="1">LeuRS</shortName>
    </alternativeName>
</protein>
<name>SYL_PARL1</name>